<accession>B5ELZ5</accession>
<organism>
    <name type="scientific">Acidithiobacillus ferrooxidans (strain ATCC 53993 / BNL-5-31)</name>
    <name type="common">Leptospirillum ferrooxidans (ATCC 53993)</name>
    <dbReference type="NCBI Taxonomy" id="380394"/>
    <lineage>
        <taxon>Bacteria</taxon>
        <taxon>Pseudomonadati</taxon>
        <taxon>Pseudomonadota</taxon>
        <taxon>Acidithiobacillia</taxon>
        <taxon>Acidithiobacillales</taxon>
        <taxon>Acidithiobacillaceae</taxon>
        <taxon>Acidithiobacillus</taxon>
    </lineage>
</organism>
<feature type="chain" id="PRO_1000142610" description="Large ribosomal subunit protein uL18">
    <location>
        <begin position="1"/>
        <end position="117"/>
    </location>
</feature>
<keyword id="KW-0687">Ribonucleoprotein</keyword>
<keyword id="KW-0689">Ribosomal protein</keyword>
<keyword id="KW-0694">RNA-binding</keyword>
<keyword id="KW-0699">rRNA-binding</keyword>
<proteinExistence type="inferred from homology"/>
<reference key="1">
    <citation type="submission" date="2008-08" db="EMBL/GenBank/DDBJ databases">
        <title>Complete sequence of Acidithiobacillus ferrooxidans ATCC 53993.</title>
        <authorList>
            <person name="Lucas S."/>
            <person name="Copeland A."/>
            <person name="Lapidus A."/>
            <person name="Glavina del Rio T."/>
            <person name="Dalin E."/>
            <person name="Tice H."/>
            <person name="Bruce D."/>
            <person name="Goodwin L."/>
            <person name="Pitluck S."/>
            <person name="Sims D."/>
            <person name="Brettin T."/>
            <person name="Detter J.C."/>
            <person name="Han C."/>
            <person name="Kuske C.R."/>
            <person name="Larimer F."/>
            <person name="Land M."/>
            <person name="Hauser L."/>
            <person name="Kyrpides N."/>
            <person name="Lykidis A."/>
            <person name="Borole A.P."/>
        </authorList>
    </citation>
    <scope>NUCLEOTIDE SEQUENCE [LARGE SCALE GENOMIC DNA]</scope>
    <source>
        <strain>ATCC 53993 / BNL-5-31</strain>
    </source>
</reference>
<comment type="function">
    <text evidence="1">This is one of the proteins that bind and probably mediate the attachment of the 5S RNA into the large ribosomal subunit, where it forms part of the central protuberance.</text>
</comment>
<comment type="subunit">
    <text evidence="1">Part of the 50S ribosomal subunit; part of the 5S rRNA/L5/L18/L25 subcomplex. Contacts the 5S and 23S rRNAs.</text>
</comment>
<comment type="similarity">
    <text evidence="1">Belongs to the universal ribosomal protein uL18 family.</text>
</comment>
<evidence type="ECO:0000255" key="1">
    <source>
        <dbReference type="HAMAP-Rule" id="MF_01337"/>
    </source>
</evidence>
<evidence type="ECO:0000305" key="2"/>
<protein>
    <recommendedName>
        <fullName evidence="1">Large ribosomal subunit protein uL18</fullName>
    </recommendedName>
    <alternativeName>
        <fullName evidence="2">50S ribosomal protein L18</fullName>
    </alternativeName>
</protein>
<gene>
    <name evidence="1" type="primary">rplR</name>
    <name type="ordered locus">Lferr_0513</name>
</gene>
<name>RL18_ACIF5</name>
<dbReference type="EMBL" id="CP001132">
    <property type="protein sequence ID" value="ACH82767.1"/>
    <property type="molecule type" value="Genomic_DNA"/>
</dbReference>
<dbReference type="RefSeq" id="WP_009569276.1">
    <property type="nucleotide sequence ID" value="NC_011206.1"/>
</dbReference>
<dbReference type="SMR" id="B5ELZ5"/>
<dbReference type="GeneID" id="65279721"/>
<dbReference type="KEGG" id="afe:Lferr_0513"/>
<dbReference type="eggNOG" id="COG0256">
    <property type="taxonomic scope" value="Bacteria"/>
</dbReference>
<dbReference type="HOGENOM" id="CLU_098841_0_1_6"/>
<dbReference type="GO" id="GO:0022625">
    <property type="term" value="C:cytosolic large ribosomal subunit"/>
    <property type="evidence" value="ECO:0007669"/>
    <property type="project" value="TreeGrafter"/>
</dbReference>
<dbReference type="GO" id="GO:0008097">
    <property type="term" value="F:5S rRNA binding"/>
    <property type="evidence" value="ECO:0007669"/>
    <property type="project" value="TreeGrafter"/>
</dbReference>
<dbReference type="GO" id="GO:0003735">
    <property type="term" value="F:structural constituent of ribosome"/>
    <property type="evidence" value="ECO:0007669"/>
    <property type="project" value="InterPro"/>
</dbReference>
<dbReference type="GO" id="GO:0006412">
    <property type="term" value="P:translation"/>
    <property type="evidence" value="ECO:0007669"/>
    <property type="project" value="UniProtKB-UniRule"/>
</dbReference>
<dbReference type="CDD" id="cd00432">
    <property type="entry name" value="Ribosomal_L18_L5e"/>
    <property type="match status" value="1"/>
</dbReference>
<dbReference type="FunFam" id="3.30.420.100:FF:000001">
    <property type="entry name" value="50S ribosomal protein L18"/>
    <property type="match status" value="1"/>
</dbReference>
<dbReference type="Gene3D" id="3.30.420.100">
    <property type="match status" value="1"/>
</dbReference>
<dbReference type="HAMAP" id="MF_01337_B">
    <property type="entry name" value="Ribosomal_uL18_B"/>
    <property type="match status" value="1"/>
</dbReference>
<dbReference type="InterPro" id="IPR004389">
    <property type="entry name" value="Ribosomal_uL18_bac-type"/>
</dbReference>
<dbReference type="InterPro" id="IPR005484">
    <property type="entry name" value="Ribosomal_uL18_bac/euk"/>
</dbReference>
<dbReference type="NCBIfam" id="TIGR00060">
    <property type="entry name" value="L18_bact"/>
    <property type="match status" value="1"/>
</dbReference>
<dbReference type="PANTHER" id="PTHR12899">
    <property type="entry name" value="39S RIBOSOMAL PROTEIN L18, MITOCHONDRIAL"/>
    <property type="match status" value="1"/>
</dbReference>
<dbReference type="PANTHER" id="PTHR12899:SF3">
    <property type="entry name" value="LARGE RIBOSOMAL SUBUNIT PROTEIN UL18M"/>
    <property type="match status" value="1"/>
</dbReference>
<dbReference type="Pfam" id="PF00861">
    <property type="entry name" value="Ribosomal_L18p"/>
    <property type="match status" value="1"/>
</dbReference>
<dbReference type="SUPFAM" id="SSF53137">
    <property type="entry name" value="Translational machinery components"/>
    <property type="match status" value="1"/>
</dbReference>
<sequence>MNKNLARLRRARKTRARIASQAKPRLCVFRSGRHIYAQVIDDSQGKVLAQASTVEGELRASMGRGADVAAAATIGQRVAAKALAVGVKEVAFDRSGYRYHGRVRALADAAREGGLSF</sequence>